<keyword id="KW-0084">Basement membrane</keyword>
<keyword id="KW-0272">Extracellular matrix</keyword>
<keyword id="KW-0488">Methylation</keyword>
<keyword id="KW-0597">Phosphoprotein</keyword>
<keyword id="KW-1267">Proteomics identification</keyword>
<keyword id="KW-1185">Reference proteome</keyword>
<keyword id="KW-0677">Repeat</keyword>
<keyword id="KW-0964">Secreted</keyword>
<accession>O00515</accession>
<accession>O95614</accession>
<accession>Q96GD8</accession>
<proteinExistence type="evidence at protein level"/>
<comment type="function">
    <text evidence="1">Anchoring filament protein which is a component of the basement membrane zone.</text>
</comment>
<comment type="subcellular location">
    <subcellularLocation>
        <location evidence="1">Secreted</location>
        <location evidence="1">Extracellular space</location>
        <location evidence="1">Extracellular matrix</location>
        <location evidence="1">Basement membrane</location>
    </subcellularLocation>
</comment>
<comment type="sequence caution" evidence="6">
    <conflict type="erroneous gene model prediction">
        <sequence resource="EMBL-CDS" id="AAD10849"/>
    </conflict>
</comment>
<evidence type="ECO:0000250" key="1"/>
<evidence type="ECO:0000250" key="2">
    <source>
        <dbReference type="UniProtKB" id="P57016"/>
    </source>
</evidence>
<evidence type="ECO:0000256" key="3">
    <source>
        <dbReference type="SAM" id="MobiDB-lite"/>
    </source>
</evidence>
<evidence type="ECO:0000269" key="4">
    <source ref="1"/>
</evidence>
<evidence type="ECO:0000269" key="5">
    <source ref="2"/>
</evidence>
<evidence type="ECO:0000305" key="6"/>
<evidence type="ECO:0007744" key="7">
    <source>
    </source>
</evidence>
<evidence type="ECO:0007744" key="8">
    <source>
    </source>
</evidence>
<evidence type="ECO:0007744" key="9">
    <source>
    </source>
</evidence>
<protein>
    <recommendedName>
        <fullName>Ladinin-1</fullName>
        <shortName>Lad-1</shortName>
    </recommendedName>
    <alternativeName>
        <fullName>Linear IgA disease antigen</fullName>
        <shortName>LADA</shortName>
    </alternativeName>
</protein>
<reference key="1">
    <citation type="submission" date="1995-12" db="EMBL/GenBank/DDBJ databases">
        <title>Cloning of a gene (LAD) underlining linear IgA disease and encoding a novel anchoring filament of the basement membrane zone.</title>
        <authorList>
            <person name="Megahed M."/>
            <person name="Motoki K."/>
            <person name="McGrath J."/>
            <person name="LaForgia S."/>
            <person name="Uitto J."/>
        </authorList>
    </citation>
    <scope>NUCLEOTIDE SEQUENCE [MRNA]</scope>
    <scope>VARIANT PRO-155</scope>
    <source>
        <tissue>Skin</tissue>
    </source>
</reference>
<reference key="2">
    <citation type="submission" date="1996-05" db="EMBL/GenBank/DDBJ databases">
        <title>Intron-exon organisation of ladinin gene, LAD.</title>
        <authorList>
            <person name="Megahed M."/>
            <person name="LaForgia S."/>
            <person name="Motoki K."/>
            <person name="McGrath J.A."/>
            <person name="Uitto J."/>
        </authorList>
    </citation>
    <scope>NUCLEOTIDE SEQUENCE [GENOMIC DNA]</scope>
    <scope>VARIANT PRO-155</scope>
</reference>
<reference key="3">
    <citation type="journal article" date="2004" name="Nat. Genet.">
        <title>Complete sequencing and characterization of 21,243 full-length human cDNAs.</title>
        <authorList>
            <person name="Ota T."/>
            <person name="Suzuki Y."/>
            <person name="Nishikawa T."/>
            <person name="Otsuki T."/>
            <person name="Sugiyama T."/>
            <person name="Irie R."/>
            <person name="Wakamatsu A."/>
            <person name="Hayashi K."/>
            <person name="Sato H."/>
            <person name="Nagai K."/>
            <person name="Kimura K."/>
            <person name="Makita H."/>
            <person name="Sekine M."/>
            <person name="Obayashi M."/>
            <person name="Nishi T."/>
            <person name="Shibahara T."/>
            <person name="Tanaka T."/>
            <person name="Ishii S."/>
            <person name="Yamamoto J."/>
            <person name="Saito K."/>
            <person name="Kawai Y."/>
            <person name="Isono Y."/>
            <person name="Nakamura Y."/>
            <person name="Nagahari K."/>
            <person name="Murakami K."/>
            <person name="Yasuda T."/>
            <person name="Iwayanagi T."/>
            <person name="Wagatsuma M."/>
            <person name="Shiratori A."/>
            <person name="Sudo H."/>
            <person name="Hosoiri T."/>
            <person name="Kaku Y."/>
            <person name="Kodaira H."/>
            <person name="Kondo H."/>
            <person name="Sugawara M."/>
            <person name="Takahashi M."/>
            <person name="Kanda K."/>
            <person name="Yokoi T."/>
            <person name="Furuya T."/>
            <person name="Kikkawa E."/>
            <person name="Omura Y."/>
            <person name="Abe K."/>
            <person name="Kamihara K."/>
            <person name="Katsuta N."/>
            <person name="Sato K."/>
            <person name="Tanikawa M."/>
            <person name="Yamazaki M."/>
            <person name="Ninomiya K."/>
            <person name="Ishibashi T."/>
            <person name="Yamashita H."/>
            <person name="Murakawa K."/>
            <person name="Fujimori K."/>
            <person name="Tanai H."/>
            <person name="Kimata M."/>
            <person name="Watanabe M."/>
            <person name="Hiraoka S."/>
            <person name="Chiba Y."/>
            <person name="Ishida S."/>
            <person name="Ono Y."/>
            <person name="Takiguchi S."/>
            <person name="Watanabe S."/>
            <person name="Yosida M."/>
            <person name="Hotuta T."/>
            <person name="Kusano J."/>
            <person name="Kanehori K."/>
            <person name="Takahashi-Fujii A."/>
            <person name="Hara H."/>
            <person name="Tanase T.-O."/>
            <person name="Nomura Y."/>
            <person name="Togiya S."/>
            <person name="Komai F."/>
            <person name="Hara R."/>
            <person name="Takeuchi K."/>
            <person name="Arita M."/>
            <person name="Imose N."/>
            <person name="Musashino K."/>
            <person name="Yuuki H."/>
            <person name="Oshima A."/>
            <person name="Sasaki N."/>
            <person name="Aotsuka S."/>
            <person name="Yoshikawa Y."/>
            <person name="Matsunawa H."/>
            <person name="Ichihara T."/>
            <person name="Shiohata N."/>
            <person name="Sano S."/>
            <person name="Moriya S."/>
            <person name="Momiyama H."/>
            <person name="Satoh N."/>
            <person name="Takami S."/>
            <person name="Terashima Y."/>
            <person name="Suzuki O."/>
            <person name="Nakagawa S."/>
            <person name="Senoh A."/>
            <person name="Mizoguchi H."/>
            <person name="Goto Y."/>
            <person name="Shimizu F."/>
            <person name="Wakebe H."/>
            <person name="Hishigaki H."/>
            <person name="Watanabe T."/>
            <person name="Sugiyama A."/>
            <person name="Takemoto M."/>
            <person name="Kawakami B."/>
            <person name="Yamazaki M."/>
            <person name="Watanabe K."/>
            <person name="Kumagai A."/>
            <person name="Itakura S."/>
            <person name="Fukuzumi Y."/>
            <person name="Fujimori Y."/>
            <person name="Komiyama M."/>
            <person name="Tashiro H."/>
            <person name="Tanigami A."/>
            <person name="Fujiwara T."/>
            <person name="Ono T."/>
            <person name="Yamada K."/>
            <person name="Fujii Y."/>
            <person name="Ozaki K."/>
            <person name="Hirao M."/>
            <person name="Ohmori Y."/>
            <person name="Kawabata A."/>
            <person name="Hikiji T."/>
            <person name="Kobatake N."/>
            <person name="Inagaki H."/>
            <person name="Ikema Y."/>
            <person name="Okamoto S."/>
            <person name="Okitani R."/>
            <person name="Kawakami T."/>
            <person name="Noguchi S."/>
            <person name="Itoh T."/>
            <person name="Shigeta K."/>
            <person name="Senba T."/>
            <person name="Matsumura K."/>
            <person name="Nakajima Y."/>
            <person name="Mizuno T."/>
            <person name="Morinaga M."/>
            <person name="Sasaki M."/>
            <person name="Togashi T."/>
            <person name="Oyama M."/>
            <person name="Hata H."/>
            <person name="Watanabe M."/>
            <person name="Komatsu T."/>
            <person name="Mizushima-Sugano J."/>
            <person name="Satoh T."/>
            <person name="Shirai Y."/>
            <person name="Takahashi Y."/>
            <person name="Nakagawa K."/>
            <person name="Okumura K."/>
            <person name="Nagase T."/>
            <person name="Nomura N."/>
            <person name="Kikuchi H."/>
            <person name="Masuho Y."/>
            <person name="Yamashita R."/>
            <person name="Nakai K."/>
            <person name="Yada T."/>
            <person name="Nakamura Y."/>
            <person name="Ohara O."/>
            <person name="Isogai T."/>
            <person name="Sugano S."/>
        </authorList>
    </citation>
    <scope>NUCLEOTIDE SEQUENCE [LARGE SCALE MRNA]</scope>
    <source>
        <tissue>Trachea</tissue>
    </source>
</reference>
<reference key="4">
    <citation type="journal article" date="2004" name="Genome Res.">
        <title>The status, quality, and expansion of the NIH full-length cDNA project: the Mammalian Gene Collection (MGC).</title>
        <authorList>
            <consortium name="The MGC Project Team"/>
        </authorList>
    </citation>
    <scope>NUCLEOTIDE SEQUENCE [LARGE SCALE MRNA]</scope>
    <source>
        <tissue>Placenta</tissue>
    </source>
</reference>
<reference key="5">
    <citation type="journal article" date="1996" name="J. Invest. Dermatol.">
        <title>Cloning of the human linear IgA disease gene (LADA) encoding a novel anchoring filament protein, ladinin.</title>
        <authorList>
            <person name="Megahed M."/>
            <person name="Motoki K."/>
            <person name="McGrath J."/>
            <person name="LaForgia S."/>
            <person name="Uitto J."/>
        </authorList>
    </citation>
    <scope>CHARACTERIZATION</scope>
</reference>
<reference key="6">
    <citation type="journal article" date="2011" name="BMC Syst. Biol.">
        <title>Initial characterization of the human central proteome.</title>
        <authorList>
            <person name="Burkard T.R."/>
            <person name="Planyavsky M."/>
            <person name="Kaupe I."/>
            <person name="Breitwieser F.P."/>
            <person name="Buerckstuemmer T."/>
            <person name="Bennett K.L."/>
            <person name="Superti-Furga G."/>
            <person name="Colinge J."/>
        </authorList>
    </citation>
    <scope>IDENTIFICATION BY MASS SPECTROMETRY [LARGE SCALE ANALYSIS]</scope>
</reference>
<reference key="7">
    <citation type="journal article" date="2011" name="Sci. Signal.">
        <title>System-wide temporal characterization of the proteome and phosphoproteome of human embryonic stem cell differentiation.</title>
        <authorList>
            <person name="Rigbolt K.T."/>
            <person name="Prokhorova T.A."/>
            <person name="Akimov V."/>
            <person name="Henningsen J."/>
            <person name="Johansen P.T."/>
            <person name="Kratchmarova I."/>
            <person name="Kassem M."/>
            <person name="Mann M."/>
            <person name="Olsen J.V."/>
            <person name="Blagoev B."/>
        </authorList>
    </citation>
    <scope>PHOSPHORYLATION [LARGE SCALE ANALYSIS] AT SER-38; SER-64; SER-121; SER-123 AND SER-394</scope>
    <scope>IDENTIFICATION BY MASS SPECTROMETRY [LARGE SCALE ANALYSIS]</scope>
</reference>
<reference key="8">
    <citation type="journal article" date="2014" name="J. Proteomics">
        <title>An enzyme assisted RP-RPLC approach for in-depth analysis of human liver phosphoproteome.</title>
        <authorList>
            <person name="Bian Y."/>
            <person name="Song C."/>
            <person name="Cheng K."/>
            <person name="Dong M."/>
            <person name="Wang F."/>
            <person name="Huang J."/>
            <person name="Sun D."/>
            <person name="Wang L."/>
            <person name="Ye M."/>
            <person name="Zou H."/>
        </authorList>
    </citation>
    <scope>PHOSPHORYLATION [LARGE SCALE ANALYSIS] AT SER-38; SER-64; SER-356 AND SER-485</scope>
    <scope>IDENTIFICATION BY MASS SPECTROMETRY [LARGE SCALE ANALYSIS]</scope>
    <source>
        <tissue>Liver</tissue>
    </source>
</reference>
<reference key="9">
    <citation type="journal article" date="2014" name="Mol. Cell. Proteomics">
        <title>Immunoaffinity enrichment and mass spectrometry analysis of protein methylation.</title>
        <authorList>
            <person name="Guo A."/>
            <person name="Gu H."/>
            <person name="Zhou J."/>
            <person name="Mulhern D."/>
            <person name="Wang Y."/>
            <person name="Lee K.A."/>
            <person name="Yang V."/>
            <person name="Aguiar M."/>
            <person name="Kornhauser J."/>
            <person name="Jia X."/>
            <person name="Ren J."/>
            <person name="Beausoleil S.A."/>
            <person name="Silva J.C."/>
            <person name="Vemulapalli V."/>
            <person name="Bedford M.T."/>
            <person name="Comb M.J."/>
        </authorList>
    </citation>
    <scope>METHYLATION [LARGE SCALE ANALYSIS] AT ARG-424</scope>
    <scope>IDENTIFICATION BY MASS SPECTROMETRY [LARGE SCALE ANALYSIS]</scope>
    <source>
        <tissue>Colon carcinoma</tissue>
    </source>
</reference>
<name>LAD1_HUMAN</name>
<feature type="chain" id="PRO_0000084349" description="Ladinin-1">
    <location>
        <begin position="1"/>
        <end position="517"/>
    </location>
</feature>
<feature type="repeat" description="SEK 1">
    <location>
        <begin position="203"/>
        <end position="205"/>
    </location>
</feature>
<feature type="repeat" description="SEK 2">
    <location>
        <begin position="209"/>
        <end position="211"/>
    </location>
</feature>
<feature type="repeat" description="SEK 3">
    <location>
        <begin position="215"/>
        <end position="217"/>
    </location>
</feature>
<feature type="repeat" description="SEK 4">
    <location>
        <begin position="221"/>
        <end position="223"/>
    </location>
</feature>
<feature type="repeat" description="SEK 5">
    <location>
        <begin position="227"/>
        <end position="229"/>
    </location>
</feature>
<feature type="repeat" description="SEK 6">
    <location>
        <begin position="239"/>
        <end position="241"/>
    </location>
</feature>
<feature type="repeat" description="SEK 7">
    <location>
        <begin position="257"/>
        <end position="259"/>
    </location>
</feature>
<feature type="repeat" description="SEK 8">
    <location>
        <begin position="269"/>
        <end position="271"/>
    </location>
</feature>
<feature type="region of interest" description="Disordered" evidence="3">
    <location>
        <begin position="1"/>
        <end position="401"/>
    </location>
</feature>
<feature type="region of interest" description="8 X SEK repeats">
    <location>
        <begin position="203"/>
        <end position="271"/>
    </location>
</feature>
<feature type="region of interest" description="Disordered" evidence="3">
    <location>
        <begin position="481"/>
        <end position="517"/>
    </location>
</feature>
<feature type="compositionally biased region" description="Polar residues" evidence="3">
    <location>
        <begin position="48"/>
        <end position="58"/>
    </location>
</feature>
<feature type="compositionally biased region" description="Polar residues" evidence="3">
    <location>
        <begin position="120"/>
        <end position="131"/>
    </location>
</feature>
<feature type="compositionally biased region" description="Basic and acidic residues" evidence="3">
    <location>
        <begin position="134"/>
        <end position="151"/>
    </location>
</feature>
<feature type="compositionally biased region" description="Basic and acidic residues" evidence="3">
    <location>
        <begin position="161"/>
        <end position="174"/>
    </location>
</feature>
<feature type="compositionally biased region" description="Basic and acidic residues" evidence="3">
    <location>
        <begin position="219"/>
        <end position="233"/>
    </location>
</feature>
<feature type="compositionally biased region" description="Polar residues" evidence="3">
    <location>
        <begin position="355"/>
        <end position="373"/>
    </location>
</feature>
<feature type="compositionally biased region" description="Polar residues" evidence="3">
    <location>
        <begin position="494"/>
        <end position="517"/>
    </location>
</feature>
<feature type="modified residue" description="Phosphoserine" evidence="7 9">
    <location>
        <position position="38"/>
    </location>
</feature>
<feature type="modified residue" description="Phosphoserine" evidence="7 9">
    <location>
        <position position="64"/>
    </location>
</feature>
<feature type="modified residue" description="Phosphoserine" evidence="2">
    <location>
        <position position="78"/>
    </location>
</feature>
<feature type="modified residue" description="Phosphoserine" evidence="7">
    <location>
        <position position="121"/>
    </location>
</feature>
<feature type="modified residue" description="Phosphoserine" evidence="7">
    <location>
        <position position="123"/>
    </location>
</feature>
<feature type="modified residue" description="Phosphoserine" evidence="2">
    <location>
        <position position="347"/>
    </location>
</feature>
<feature type="modified residue" description="Phosphoserine" evidence="9">
    <location>
        <position position="356"/>
    </location>
</feature>
<feature type="modified residue" description="Phosphoserine" evidence="7">
    <location>
        <position position="394"/>
    </location>
</feature>
<feature type="modified residue" description="Omega-N-methylarginine" evidence="8">
    <location>
        <position position="424"/>
    </location>
</feature>
<feature type="modified residue" description="Phosphoserine" evidence="9">
    <location>
        <position position="485"/>
    </location>
</feature>
<feature type="sequence variant" id="VAR_046539" description="In dbSNP:rs3738281.">
    <original>A</original>
    <variation>S</variation>
    <location>
        <position position="56"/>
    </location>
</feature>
<feature type="sequence variant" id="VAR_046540" description="In dbSNP:rs1128316." evidence="4 5">
    <original>A</original>
    <variation>P</variation>
    <location>
        <position position="155"/>
    </location>
</feature>
<feature type="sequence variant" id="VAR_046541" description="In dbSNP:rs12088790.">
    <original>L</original>
    <variation>P</variation>
    <location>
        <position position="243"/>
    </location>
</feature>
<feature type="sequence variant" id="VAR_046542" description="In dbSNP:rs11805972.">
    <original>P</original>
    <variation>Q</variation>
    <location>
        <position position="279"/>
    </location>
</feature>
<feature type="sequence variant" id="VAR_046543" description="In dbSNP:rs4128458.">
    <original>K</original>
    <variation>E</variation>
    <location>
        <position position="323"/>
    </location>
</feature>
<feature type="sequence variant" id="VAR_046544" description="In dbSNP:rs2275866.">
    <original>T</original>
    <variation>S</variation>
    <location>
        <position position="503"/>
    </location>
</feature>
<gene>
    <name type="primary">LAD1</name>
    <name type="synonym">LAD</name>
</gene>
<dbReference type="EMBL" id="U42408">
    <property type="protein sequence ID" value="AAB58817.1"/>
    <property type="molecule type" value="mRNA"/>
</dbReference>
<dbReference type="EMBL" id="U58994">
    <property type="protein sequence ID" value="AAD10849.1"/>
    <property type="status" value="ALT_SEQ"/>
    <property type="molecule type" value="Genomic_DNA"/>
</dbReference>
<dbReference type="EMBL" id="AK313388">
    <property type="protein sequence ID" value="BAG36186.1"/>
    <property type="molecule type" value="mRNA"/>
</dbReference>
<dbReference type="EMBL" id="BC009742">
    <property type="protein sequence ID" value="AAH09742.1"/>
    <property type="molecule type" value="mRNA"/>
</dbReference>
<dbReference type="CCDS" id="CCDS1410.1"/>
<dbReference type="RefSeq" id="NP_005549.2">
    <property type="nucleotide sequence ID" value="NM_005558.3"/>
</dbReference>
<dbReference type="BioGRID" id="110095">
    <property type="interactions" value="65"/>
</dbReference>
<dbReference type="FunCoup" id="O00515">
    <property type="interactions" value="164"/>
</dbReference>
<dbReference type="IntAct" id="O00515">
    <property type="interactions" value="37"/>
</dbReference>
<dbReference type="MINT" id="O00515"/>
<dbReference type="STRING" id="9606.ENSP00000375829"/>
<dbReference type="iPTMnet" id="O00515"/>
<dbReference type="PhosphoSitePlus" id="O00515"/>
<dbReference type="BioMuta" id="LAD1"/>
<dbReference type="jPOST" id="O00515"/>
<dbReference type="MassIVE" id="O00515"/>
<dbReference type="PaxDb" id="9606-ENSP00000375829"/>
<dbReference type="PeptideAtlas" id="O00515"/>
<dbReference type="ProteomicsDB" id="47951"/>
<dbReference type="Pumba" id="O00515"/>
<dbReference type="Antibodypedia" id="20642">
    <property type="antibodies" value="157 antibodies from 27 providers"/>
</dbReference>
<dbReference type="DNASU" id="3898"/>
<dbReference type="Ensembl" id="ENST00000391967.7">
    <property type="protein sequence ID" value="ENSP00000375829.2"/>
    <property type="gene ID" value="ENSG00000159166.15"/>
</dbReference>
<dbReference type="GeneID" id="3898"/>
<dbReference type="KEGG" id="hsa:3898"/>
<dbReference type="MANE-Select" id="ENST00000391967.7">
    <property type="protein sequence ID" value="ENSP00000375829.2"/>
    <property type="RefSeq nucleotide sequence ID" value="NM_005558.4"/>
    <property type="RefSeq protein sequence ID" value="NP_005549.2"/>
</dbReference>
<dbReference type="UCSC" id="uc001gwm.4">
    <property type="organism name" value="human"/>
</dbReference>
<dbReference type="AGR" id="HGNC:6472"/>
<dbReference type="CTD" id="3898"/>
<dbReference type="DisGeNET" id="3898"/>
<dbReference type="GeneCards" id="LAD1"/>
<dbReference type="HGNC" id="HGNC:6472">
    <property type="gene designation" value="LAD1"/>
</dbReference>
<dbReference type="HPA" id="ENSG00000159166">
    <property type="expression patterns" value="Tissue enhanced (esophagus, skin)"/>
</dbReference>
<dbReference type="MIM" id="602314">
    <property type="type" value="gene"/>
</dbReference>
<dbReference type="neXtProt" id="NX_O00515"/>
<dbReference type="OpenTargets" id="ENSG00000159166"/>
<dbReference type="PharmGKB" id="PA30263"/>
<dbReference type="VEuPathDB" id="HostDB:ENSG00000159166"/>
<dbReference type="eggNOG" id="ENOG502S2ZW">
    <property type="taxonomic scope" value="Eukaryota"/>
</dbReference>
<dbReference type="GeneTree" id="ENSGT00390000005256"/>
<dbReference type="HOGENOM" id="CLU_038228_0_0_1"/>
<dbReference type="InParanoid" id="O00515"/>
<dbReference type="OrthoDB" id="9948606at2759"/>
<dbReference type="PAN-GO" id="O00515">
    <property type="GO annotations" value="0 GO annotations based on evolutionary models"/>
</dbReference>
<dbReference type="PhylomeDB" id="O00515"/>
<dbReference type="TreeFam" id="TF335896"/>
<dbReference type="PathwayCommons" id="O00515"/>
<dbReference type="SignaLink" id="O00515"/>
<dbReference type="BioGRID-ORCS" id="3898">
    <property type="hits" value="27 hits in 1144 CRISPR screens"/>
</dbReference>
<dbReference type="ChiTaRS" id="LAD1">
    <property type="organism name" value="human"/>
</dbReference>
<dbReference type="GeneWiki" id="LAD1"/>
<dbReference type="GenomeRNAi" id="3898"/>
<dbReference type="Pharos" id="O00515">
    <property type="development level" value="Tbio"/>
</dbReference>
<dbReference type="PRO" id="PR:O00515"/>
<dbReference type="Proteomes" id="UP000005640">
    <property type="component" value="Chromosome 1"/>
</dbReference>
<dbReference type="RNAct" id="O00515">
    <property type="molecule type" value="protein"/>
</dbReference>
<dbReference type="Bgee" id="ENSG00000159166">
    <property type="expression patterns" value="Expressed in lower esophagus mucosa and 136 other cell types or tissues"/>
</dbReference>
<dbReference type="ExpressionAtlas" id="O00515">
    <property type="expression patterns" value="baseline and differential"/>
</dbReference>
<dbReference type="GO" id="GO:0015629">
    <property type="term" value="C:actin cytoskeleton"/>
    <property type="evidence" value="ECO:0000314"/>
    <property type="project" value="HPA"/>
</dbReference>
<dbReference type="GO" id="GO:0005604">
    <property type="term" value="C:basement membrane"/>
    <property type="evidence" value="ECO:0007669"/>
    <property type="project" value="UniProtKB-SubCell"/>
</dbReference>
<dbReference type="GO" id="GO:0070062">
    <property type="term" value="C:extracellular exosome"/>
    <property type="evidence" value="ECO:0007005"/>
    <property type="project" value="UniProtKB"/>
</dbReference>
<dbReference type="GO" id="GO:0045296">
    <property type="term" value="F:cadherin binding"/>
    <property type="evidence" value="ECO:0007005"/>
    <property type="project" value="BHF-UCL"/>
</dbReference>
<dbReference type="GO" id="GO:0005198">
    <property type="term" value="F:structural molecule activity"/>
    <property type="evidence" value="ECO:0000304"/>
    <property type="project" value="ProtInc"/>
</dbReference>
<dbReference type="InterPro" id="IPR017404">
    <property type="entry name" value="Ladinin_1"/>
</dbReference>
<dbReference type="PANTHER" id="PTHR12392">
    <property type="entry name" value="LADININ 1"/>
    <property type="match status" value="1"/>
</dbReference>
<dbReference type="PANTHER" id="PTHR12392:SF0">
    <property type="entry name" value="LADININ-1"/>
    <property type="match status" value="1"/>
</dbReference>
<dbReference type="PIRSF" id="PIRSF038144">
    <property type="entry name" value="Ladinin_1"/>
    <property type="match status" value="1"/>
</dbReference>
<organism>
    <name type="scientific">Homo sapiens</name>
    <name type="common">Human</name>
    <dbReference type="NCBI Taxonomy" id="9606"/>
    <lineage>
        <taxon>Eukaryota</taxon>
        <taxon>Metazoa</taxon>
        <taxon>Chordata</taxon>
        <taxon>Craniata</taxon>
        <taxon>Vertebrata</taxon>
        <taxon>Euteleostomi</taxon>
        <taxon>Mammalia</taxon>
        <taxon>Eutheria</taxon>
        <taxon>Euarchontoglires</taxon>
        <taxon>Primates</taxon>
        <taxon>Haplorrhini</taxon>
        <taxon>Catarrhini</taxon>
        <taxon>Hominidae</taxon>
        <taxon>Homo</taxon>
    </lineage>
</organism>
<sequence length="517" mass="57131">MAVSRKDWSALSSLARQRTLEDEEEQERERRRRHRNLSSTTDDEAPRLSQNGDRQASASERLPSVEEAEVPKPLPPASKDEDEDIQSILRTRQERRQRRQVVEAAQAPIQERLEAEEGRNSLSPVQATQKPLVSKKELEIPPRRRLSREQRGPWALEEESLVGREPEERKKGVPEKSPVLEKSSMPKKTAPEKSLVSDKTSISEKVLASEKTSLSEKIAVSEKRNSSEKKSVLEKTSVSEKSLAPGMALGSGRRLVSEKASIFEKALASEKSPTADAKPAPKRATASEQPLAQEPPASGGSPATTKEQRGRALPGKNLPSLAKQGASDPPTVASRLPPVTLQVKIPSKEEEADMSSPTQRTYSSSLKRSSPRTISFRMKPKKENSETTLTRSASMKLPDNTVKLGEKLERYHTAIRRSESVKSRGLPCTELFVAPVGVASKRHLFEKELAGQSRAEPASSRKENLRLSGVVTSRLNLWISRTQESGDQDPQEAQKASSATERTQWGQKSDSSLDAEV</sequence>